<keyword id="KW-0002">3D-structure</keyword>
<keyword id="KW-0297">G-protein coupled receptor</keyword>
<keyword id="KW-0325">Glycoprotein</keyword>
<keyword id="KW-1032">Host cell membrane</keyword>
<keyword id="KW-1043">Host membrane</keyword>
<keyword id="KW-0945">Host-virus interaction</keyword>
<keyword id="KW-1086">Inhibition of host chemokines by virus</keyword>
<keyword id="KW-0472">Membrane</keyword>
<keyword id="KW-0675">Receptor</keyword>
<keyword id="KW-0807">Transducer</keyword>
<keyword id="KW-0812">Transmembrane</keyword>
<keyword id="KW-1133">Transmembrane helix</keyword>
<keyword id="KW-0899">Viral immunoevasion</keyword>
<evidence type="ECO:0000255" key="1"/>
<evidence type="ECO:0000255" key="2">
    <source>
        <dbReference type="PROSITE-ProRule" id="PRU00521"/>
    </source>
</evidence>
<evidence type="ECO:0000269" key="3">
    <source>
    </source>
</evidence>
<evidence type="ECO:0000269" key="4">
    <source>
    </source>
</evidence>
<evidence type="ECO:0000269" key="5">
    <source>
    </source>
</evidence>
<evidence type="ECO:0000269" key="6">
    <source>
    </source>
</evidence>
<evidence type="ECO:0000269" key="7">
    <source>
    </source>
</evidence>
<evidence type="ECO:0000269" key="8">
    <source>
    </source>
</evidence>
<evidence type="ECO:0000269" key="9">
    <source>
    </source>
</evidence>
<evidence type="ECO:0000305" key="10"/>
<evidence type="ECO:0007744" key="11">
    <source>
        <dbReference type="PDB" id="4XT1"/>
    </source>
</evidence>
<evidence type="ECO:0007744" key="12">
    <source>
        <dbReference type="PDB" id="4XT3"/>
    </source>
</evidence>
<evidence type="ECO:0007744" key="13">
    <source>
        <dbReference type="PDB" id="7RKF"/>
    </source>
</evidence>
<evidence type="ECO:0007744" key="14">
    <source>
        <dbReference type="PDB" id="7RKM"/>
    </source>
</evidence>
<evidence type="ECO:0007744" key="15">
    <source>
        <dbReference type="PDB" id="7RKN"/>
    </source>
</evidence>
<evidence type="ECO:0007829" key="16">
    <source>
        <dbReference type="PDB" id="4XT1"/>
    </source>
</evidence>
<organismHost>
    <name type="scientific">Homo sapiens</name>
    <name type="common">Human</name>
    <dbReference type="NCBI Taxonomy" id="9606"/>
</organismHost>
<accession>P69332</accession>
<accession>P09704</accession>
<accession>P32952</accession>
<accession>Q7M6H3</accession>
<gene>
    <name type="primary">US28</name>
</gene>
<protein>
    <recommendedName>
        <fullName>G-protein coupled receptor homolog US28</fullName>
    </recommendedName>
    <alternativeName>
        <fullName>HHRF3</fullName>
    </alternativeName>
</protein>
<name>US28_HCMVA</name>
<proteinExistence type="evidence at protein level"/>
<feature type="chain" id="PRO_0000070246" description="G-protein coupled receptor homolog US28">
    <location>
        <begin position="1"/>
        <end position="354"/>
    </location>
</feature>
<feature type="topological domain" description="Extracellular" evidence="1">
    <location>
        <begin position="1"/>
        <end position="37"/>
    </location>
</feature>
<feature type="transmembrane region" description="Helical; Name=1" evidence="1">
    <location>
        <begin position="38"/>
        <end position="58"/>
    </location>
</feature>
<feature type="topological domain" description="Cytoplasmic" evidence="1">
    <location>
        <begin position="59"/>
        <end position="69"/>
    </location>
</feature>
<feature type="transmembrane region" description="Helical; Name=2" evidence="1">
    <location>
        <begin position="70"/>
        <end position="90"/>
    </location>
</feature>
<feature type="topological domain" description="Extracellular" evidence="1">
    <location>
        <begin position="91"/>
        <end position="101"/>
    </location>
</feature>
<feature type="transmembrane region" description="Helical; Name=3" evidence="1">
    <location>
        <begin position="102"/>
        <end position="122"/>
    </location>
</feature>
<feature type="topological domain" description="Cytoplasmic" evidence="1">
    <location>
        <begin position="123"/>
        <end position="145"/>
    </location>
</feature>
<feature type="transmembrane region" description="Helical; Name=4" evidence="1">
    <location>
        <begin position="146"/>
        <end position="166"/>
    </location>
</feature>
<feature type="topological domain" description="Extracellular" evidence="1">
    <location>
        <begin position="167"/>
        <end position="183"/>
    </location>
</feature>
<feature type="transmembrane region" description="Helical; Name=5" evidence="1">
    <location>
        <begin position="184"/>
        <end position="204"/>
    </location>
</feature>
<feature type="topological domain" description="Cytoplasmic" evidence="1">
    <location>
        <begin position="205"/>
        <end position="228"/>
    </location>
</feature>
<feature type="transmembrane region" description="Helical; Name=6" evidence="1">
    <location>
        <begin position="229"/>
        <end position="249"/>
    </location>
</feature>
<feature type="topological domain" description="Extracellular" evidence="1">
    <location>
        <begin position="250"/>
        <end position="273"/>
    </location>
</feature>
<feature type="transmembrane region" description="Helical; Name=7" evidence="1">
    <location>
        <begin position="274"/>
        <end position="294"/>
    </location>
</feature>
<feature type="topological domain" description="Cytoplasmic" evidence="1">
    <location>
        <begin position="295"/>
        <end position="354"/>
    </location>
</feature>
<feature type="glycosylation site" description="N-linked (GlcNAc...) asparagine; by host" evidence="1">
    <location>
        <position position="30"/>
    </location>
</feature>
<feature type="sequence variant" description="In strain: Isolate clinical VHL/E.">
    <original>ED</original>
    <variation>DE</variation>
    <location>
        <begin position="18"/>
        <end position="19"/>
    </location>
</feature>
<feature type="sequence variant" description="In strain: Isolate clinical VHL/E.">
    <original>F</original>
    <variation>L</variation>
    <location>
        <position position="25"/>
    </location>
</feature>
<feature type="sequence variant" description="In strain: Isolate clinical VHL/E.">
    <original>R</original>
    <variation>K</variation>
    <location>
        <position position="267"/>
    </location>
</feature>
<feature type="sequence variant" description="In strain: Isolate clinical VHL/E.">
    <original>V</original>
    <variation>A</variation>
    <location>
        <position position="346"/>
    </location>
</feature>
<feature type="helix" evidence="16">
    <location>
        <begin position="26"/>
        <end position="59"/>
    </location>
</feature>
<feature type="helix" evidence="16">
    <location>
        <begin position="67"/>
        <end position="83"/>
    </location>
</feature>
<feature type="helix" evidence="16">
    <location>
        <begin position="86"/>
        <end position="94"/>
    </location>
</feature>
<feature type="helix" evidence="16">
    <location>
        <begin position="104"/>
        <end position="133"/>
    </location>
</feature>
<feature type="helix" evidence="16">
    <location>
        <begin position="141"/>
        <end position="157"/>
    </location>
</feature>
<feature type="helix" evidence="16">
    <location>
        <begin position="160"/>
        <end position="163"/>
    </location>
</feature>
<feature type="strand" evidence="16">
    <location>
        <begin position="166"/>
        <end position="169"/>
    </location>
</feature>
<feature type="strand" evidence="16">
    <location>
        <begin position="172"/>
        <end position="175"/>
    </location>
</feature>
<feature type="strand" evidence="16">
    <location>
        <begin position="177"/>
        <end position="180"/>
    </location>
</feature>
<feature type="helix" evidence="16">
    <location>
        <begin position="184"/>
        <end position="196"/>
    </location>
</feature>
<feature type="helix" evidence="16">
    <location>
        <begin position="198"/>
        <end position="215"/>
    </location>
</feature>
<feature type="helix" evidence="16">
    <location>
        <begin position="223"/>
        <end position="255"/>
    </location>
</feature>
<feature type="helix" evidence="16">
    <location>
        <begin position="263"/>
        <end position="280"/>
    </location>
</feature>
<feature type="helix" evidence="16">
    <location>
        <begin position="283"/>
        <end position="290"/>
    </location>
</feature>
<feature type="turn" evidence="16">
    <location>
        <begin position="291"/>
        <end position="294"/>
    </location>
</feature>
<feature type="helix" evidence="16">
    <location>
        <begin position="296"/>
        <end position="308"/>
    </location>
</feature>
<sequence>MTPTTTTAELTTEFDYDEDATPCVFTDVLNQSKPVTLFLYGVVFLFGSIGNFLVIFTITWRRRIQCSGDVYFINLAAADLLFVCTLPLWMQYLLDHNSLASVPCTLLTACFYVAMFASLCFITEIALDRYYAIVYMRYRPVKQACLFSIFWWIFAVIIAIPHFMVVTKKDNQCMTDYDYLEVSYPIILNVELMLGAFVIPLSVISYCYYRISRIVAVSQSRHKGRIVRVLIAVVLVFIIFWLPYHLTLFVDTLKLLKWISSSCEFERSLKRALILTESLAFCHCCLNPLLYVFVGTKFRQELHCLLAEFRQRLFSRDVSWYHSMSFSRRSSPSRRETSSDTLSDEVCRVSQIIP</sequence>
<reference key="1">
    <citation type="journal article" date="1986" name="J. Mol. Biol.">
        <title>Sequence of the short unique region, short repeats, and part of the long repeats of human cytomegalovirus.</title>
        <authorList>
            <person name="Weston K.M."/>
            <person name="Barrell B.G."/>
        </authorList>
    </citation>
    <scope>NUCLEOTIDE SEQUENCE [GENOMIC DNA]</scope>
</reference>
<reference key="2">
    <citation type="journal article" date="1990" name="Curr. Top. Microbiol. Immunol.">
        <title>Analysis of the protein-coding content of the sequence of human cytomegalovirus strain AD169.</title>
        <authorList>
            <person name="Chee M.S."/>
            <person name="Bankier A.T."/>
            <person name="Beck S."/>
            <person name="Bohni R."/>
            <person name="Brown C.M."/>
            <person name="Cerny R."/>
            <person name="Horsnell T."/>
            <person name="Hutchison C.A. III"/>
            <person name="Kouzarides T."/>
            <person name="Martignetti J.A."/>
            <person name="Preddie E."/>
            <person name="Satchwell S.C."/>
            <person name="Tomlinson P."/>
            <person name="Weston K.M."/>
            <person name="Barrell B.G."/>
        </authorList>
    </citation>
    <scope>NUCLEOTIDE SEQUENCE [LARGE SCALE GENOMIC DNA]</scope>
</reference>
<reference key="3">
    <citation type="journal article" date="1995" name="Biochem. Biophys. Res. Commun.">
        <title>The cytomegalovirus US28 protein binds multiple CC chemokines with high affinity.</title>
        <authorList>
            <person name="Kuhn D.E."/>
            <person name="Beall C.J."/>
            <person name="Kolattukudy P.E."/>
        </authorList>
    </citation>
    <scope>NUCLEOTIDE SEQUENCE [GENOMIC DNA]</scope>
    <scope>FUNCTION</scope>
    <source>
        <strain>Isolate clinical VHL/E</strain>
    </source>
</reference>
<reference key="4">
    <citation type="journal article" date="1990" name="Nature">
        <title>Human cytomegalovirus encodes three G protein-coupled receptor homologues.</title>
        <authorList>
            <person name="Chee M.S."/>
            <person name="Satchwell S.C."/>
            <person name="Preddie E."/>
            <person name="Weston K.M."/>
            <person name="Barrell B.G."/>
        </authorList>
    </citation>
    <scope>CHARACTERIZATION</scope>
</reference>
<reference key="5">
    <citation type="journal article" date="1994" name="J. Biol. Chem.">
        <title>Human cytomegalovirus open reading frame US28 encodes a functional beta chemokine receptor.</title>
        <authorList>
            <person name="Gao J.-L."/>
            <person name="Murphy P.M."/>
        </authorList>
    </citation>
    <scope>IDENTIFICATION OF C-TERMINAL FRAMESHIFT</scope>
    <scope>FUNCTION</scope>
</reference>
<reference key="6">
    <citation type="journal article" date="2003" name="J. Gen. Virol.">
        <title>The human cytomegalovirus genome revisited: comparison with the chimpanzee cytomegalovirus genome.</title>
        <authorList>
            <person name="Davison A.J."/>
            <person name="Dolan A."/>
            <person name="Akter P."/>
            <person name="Addison C."/>
            <person name="Dargan D.J."/>
            <person name="Alcendor D.J."/>
            <person name="McGeoch D.J."/>
            <person name="Hayward G.S."/>
        </authorList>
    </citation>
    <scope>GENOME REANNOTATION</scope>
</reference>
<reference key="7">
    <citation type="journal article" date="2003" name="J. Gen. Virol.">
        <authorList>
            <person name="Davison A.J."/>
            <person name="Dolan A."/>
            <person name="Akter P."/>
            <person name="Addison C."/>
            <person name="Dargan D.J."/>
            <person name="Alcendor D.J."/>
            <person name="McGeoch D.J."/>
            <person name="Hayward G.S."/>
        </authorList>
    </citation>
    <scope>ERRATUM OF PUBMED:12533697</scope>
</reference>
<reference key="8">
    <citation type="journal article" date="2001" name="J. Biol. Chem.">
        <title>Constitutive signaling of the human cytomegalovirus-encoded chemokine receptor US28.</title>
        <authorList>
            <person name="Casarosa P."/>
            <person name="Bakker R.A."/>
            <person name="Verzijl D."/>
            <person name="Navis M."/>
            <person name="Timmerman H."/>
            <person name="Leurs R."/>
            <person name="Smit M.J."/>
        </authorList>
    </citation>
    <scope>FUNCTION</scope>
</reference>
<reference key="9">
    <citation type="journal article" date="2002" name="J. Biol. Chem.">
        <title>Surface expression and endocytosis of the human cytomegalovirus-encoded chemokine receptor US28 is regulated by agonist-independent phosphorylation.</title>
        <authorList>
            <person name="Mokros T."/>
            <person name="Rehm A."/>
            <person name="Droese J."/>
            <person name="Oppermann M."/>
            <person name="Lipp M."/>
            <person name="Hopken U.E."/>
        </authorList>
    </citation>
    <scope>PHOSPHORYLATION</scope>
</reference>
<reference key="10">
    <citation type="journal article" date="2010" name="Traffic">
        <title>The G-protein coupled receptor associated sorting protein GASP-1 regulates the signalling and trafficking of the viral chemokine receptor US28.</title>
        <authorList>
            <person name="Tschische P."/>
            <person name="Moser E."/>
            <person name="Thompson D."/>
            <person name="Vischer H.F."/>
            <person name="Parzmair G.P."/>
            <person name="Pommer V."/>
            <person name="Platzer W."/>
            <person name="Schwarzbraun T."/>
            <person name="Schaider H."/>
            <person name="Smit M.J."/>
            <person name="Martini L."/>
            <person name="Whistler J.L."/>
            <person name="Waldhoer M."/>
        </authorList>
    </citation>
    <scope>INTERACTION WITH HOST GPRASP1</scope>
</reference>
<reference evidence="11 12" key="11">
    <citation type="journal article" date="2015" name="Science">
        <title>Structural basis for chemokine recognition and activation of a viral G protein-coupled receptor.</title>
        <authorList>
            <person name="Burg J.S."/>
            <person name="Ingram J.R."/>
            <person name="Venkatakrishnan A.J."/>
            <person name="Jude K.M."/>
            <person name="Dukkipati A."/>
            <person name="Feinberg E.N."/>
            <person name="Angelini A."/>
            <person name="Waghray D."/>
            <person name="Dror R.O."/>
            <person name="Ploegh H.L."/>
            <person name="Garcia K.C."/>
        </authorList>
    </citation>
    <scope>X-RAY CRYSTALLOGRAPHY (2.89 ANGSTROMS) IN COMPLEX WITH HOST CX3CL1</scope>
    <scope>INTERACTION WITH HOST CX3CL1</scope>
    <scope>FUNCTION</scope>
</reference>
<reference evidence="13 14 15" key="12">
    <citation type="journal article" date="2022" name="Sci. Adv.">
        <title>Atypical structural snapshots of human cytomegalovirus GPCR interactions with host G proteins.</title>
        <authorList>
            <person name="Tsutsumi N."/>
            <person name="Maeda S."/>
            <person name="Qu Q."/>
            <person name="Voegele M."/>
            <person name="Jude K.M."/>
            <person name="Suomivuori C.M."/>
            <person name="Panova O."/>
            <person name="Waghray D."/>
            <person name="Kato H.E."/>
            <person name="Velasco A."/>
            <person name="Dror R.O."/>
            <person name="Skiniotis G."/>
            <person name="Kobilka B.K."/>
            <person name="Garcia K.C."/>
        </authorList>
    </citation>
    <scope>STRUCTURE BY ELECTRON MICROSCOPY (4.00 ANGSTROMS) IN COMPLEX WITH HOST GNB1; GNA11; CX3CL1 AND GNG2</scope>
    <scope>INTERACTION WITH HOST GNA11</scope>
    <scope>STRUCTURE BY ELECTRON MICROSCOPY (3.50 ANGSTROMS) IN COMPLEX WITH HOST GNB1; GNAI1; CX3CL1 AND GNG2</scope>
    <scope>FUNCTION</scope>
</reference>
<dbReference type="EMBL" id="X04650">
    <property type="protein sequence ID" value="CAA28338.1"/>
    <property type="status" value="ALT_FRAME"/>
    <property type="molecule type" value="Genomic_DNA"/>
</dbReference>
<dbReference type="EMBL" id="X17403">
    <property type="protein sequence ID" value="CAA35260.1"/>
    <property type="status" value="ALT_FRAME"/>
    <property type="molecule type" value="Genomic_DNA"/>
</dbReference>
<dbReference type="EMBL" id="L20501">
    <property type="protein sequence ID" value="AAA98741.1"/>
    <property type="molecule type" value="Genomic_DNA"/>
</dbReference>
<dbReference type="PIR" id="C27216">
    <property type="entry name" value="QQBED3"/>
</dbReference>
<dbReference type="PDB" id="4XT1">
    <property type="method" value="X-ray"/>
    <property type="resolution" value="2.89 A"/>
    <property type="chains" value="A=1-354"/>
</dbReference>
<dbReference type="PDB" id="4XT3">
    <property type="method" value="X-ray"/>
    <property type="resolution" value="3.80 A"/>
    <property type="chains" value="A=1-354"/>
</dbReference>
<dbReference type="PDB" id="7RKF">
    <property type="method" value="EM"/>
    <property type="resolution" value="4.00 A"/>
    <property type="chains" value="F=1-354"/>
</dbReference>
<dbReference type="PDB" id="7RKM">
    <property type="method" value="EM"/>
    <property type="resolution" value="3.50 A"/>
    <property type="chains" value="F=1-354"/>
</dbReference>
<dbReference type="PDB" id="7RKN">
    <property type="method" value="EM"/>
    <property type="resolution" value="3.60 A"/>
    <property type="chains" value="F=1-354"/>
</dbReference>
<dbReference type="PDBsum" id="4XT1"/>
<dbReference type="PDBsum" id="4XT3"/>
<dbReference type="PDBsum" id="7RKF"/>
<dbReference type="PDBsum" id="7RKM"/>
<dbReference type="PDBsum" id="7RKN"/>
<dbReference type="EMDB" id="EMD-24496"/>
<dbReference type="EMDB" id="EMD-24500"/>
<dbReference type="EMDB" id="EMD-24501"/>
<dbReference type="SMR" id="P69332"/>
<dbReference type="DIP" id="DIP-61489N"/>
<dbReference type="IntAct" id="P69332">
    <property type="interactions" value="1"/>
</dbReference>
<dbReference type="BindingDB" id="P69332"/>
<dbReference type="ChEMBL" id="CHEMBL4259"/>
<dbReference type="GlyCosmos" id="P69332">
    <property type="glycosylation" value="1 site, No reported glycans"/>
</dbReference>
<dbReference type="iPTMnet" id="P69332"/>
<dbReference type="ABCD" id="P69332">
    <property type="antibodies" value="1 sequenced antibody"/>
</dbReference>
<dbReference type="EvolutionaryTrace" id="P69332"/>
<dbReference type="Proteomes" id="UP000008991">
    <property type="component" value="Segment"/>
</dbReference>
<dbReference type="GO" id="GO:0020002">
    <property type="term" value="C:host cell plasma membrane"/>
    <property type="evidence" value="ECO:0007669"/>
    <property type="project" value="UniProtKB-SubCell"/>
</dbReference>
<dbReference type="GO" id="GO:0016020">
    <property type="term" value="C:membrane"/>
    <property type="evidence" value="ECO:0007669"/>
    <property type="project" value="UniProtKB-KW"/>
</dbReference>
<dbReference type="GO" id="GO:0019957">
    <property type="term" value="F:C-C chemokine binding"/>
    <property type="evidence" value="ECO:0007669"/>
    <property type="project" value="TreeGrafter"/>
</dbReference>
<dbReference type="GO" id="GO:0016493">
    <property type="term" value="F:C-C chemokine receptor activity"/>
    <property type="evidence" value="ECO:0007669"/>
    <property type="project" value="TreeGrafter"/>
</dbReference>
<dbReference type="GO" id="GO:0019722">
    <property type="term" value="P:calcium-mediated signaling"/>
    <property type="evidence" value="ECO:0007669"/>
    <property type="project" value="TreeGrafter"/>
</dbReference>
<dbReference type="GO" id="GO:0060326">
    <property type="term" value="P:cell chemotaxis"/>
    <property type="evidence" value="ECO:0007669"/>
    <property type="project" value="TreeGrafter"/>
</dbReference>
<dbReference type="GO" id="GO:0006955">
    <property type="term" value="P:immune response"/>
    <property type="evidence" value="ECO:0007669"/>
    <property type="project" value="TreeGrafter"/>
</dbReference>
<dbReference type="GO" id="GO:0007204">
    <property type="term" value="P:positive regulation of cytosolic calcium ion concentration"/>
    <property type="evidence" value="ECO:0007669"/>
    <property type="project" value="TreeGrafter"/>
</dbReference>
<dbReference type="GO" id="GO:0019087">
    <property type="term" value="P:symbiont-mediated transformation of host cell"/>
    <property type="evidence" value="ECO:0000314"/>
    <property type="project" value="CACAO"/>
</dbReference>
<dbReference type="CDD" id="cd14984">
    <property type="entry name" value="7tmA_Chemokine_R"/>
    <property type="match status" value="1"/>
</dbReference>
<dbReference type="Gene3D" id="1.20.1070.10">
    <property type="entry name" value="Rhodopsin 7-helix transmembrane proteins"/>
    <property type="match status" value="1"/>
</dbReference>
<dbReference type="InterPro" id="IPR050119">
    <property type="entry name" value="CCR1-9-like"/>
</dbReference>
<dbReference type="InterPro" id="IPR000355">
    <property type="entry name" value="Chemokine_rcpt"/>
</dbReference>
<dbReference type="InterPro" id="IPR000276">
    <property type="entry name" value="GPCR_Rhodpsn"/>
</dbReference>
<dbReference type="InterPro" id="IPR017452">
    <property type="entry name" value="GPCR_Rhodpsn_7TM"/>
</dbReference>
<dbReference type="PANTHER" id="PTHR10489">
    <property type="entry name" value="CELL ADHESION MOLECULE"/>
    <property type="match status" value="1"/>
</dbReference>
<dbReference type="PANTHER" id="PTHR10489:SF955">
    <property type="entry name" value="CX3C CHEMOKINE RECEPTOR 1"/>
    <property type="match status" value="1"/>
</dbReference>
<dbReference type="Pfam" id="PF00001">
    <property type="entry name" value="7tm_1"/>
    <property type="match status" value="1"/>
</dbReference>
<dbReference type="PRINTS" id="PR00657">
    <property type="entry name" value="CCCHEMOKINER"/>
</dbReference>
<dbReference type="PRINTS" id="PR00237">
    <property type="entry name" value="GPCRRHODOPSN"/>
</dbReference>
<dbReference type="SUPFAM" id="SSF81321">
    <property type="entry name" value="Family A G protein-coupled receptor-like"/>
    <property type="match status" value="1"/>
</dbReference>
<dbReference type="PROSITE" id="PS00237">
    <property type="entry name" value="G_PROTEIN_RECEP_F1_1"/>
    <property type="match status" value="1"/>
</dbReference>
<dbReference type="PROSITE" id="PS50262">
    <property type="entry name" value="G_PROTEIN_RECEP_F1_2"/>
    <property type="match status" value="1"/>
</dbReference>
<organism>
    <name type="scientific">Human cytomegalovirus (strain AD169)</name>
    <name type="common">HHV-5</name>
    <name type="synonym">Human herpesvirus 5</name>
    <dbReference type="NCBI Taxonomy" id="10360"/>
    <lineage>
        <taxon>Viruses</taxon>
        <taxon>Duplodnaviria</taxon>
        <taxon>Heunggongvirae</taxon>
        <taxon>Peploviricota</taxon>
        <taxon>Herviviricetes</taxon>
        <taxon>Herpesvirales</taxon>
        <taxon>Orthoherpesviridae</taxon>
        <taxon>Betaherpesvirinae</taxon>
        <taxon>Cytomegalovirus</taxon>
        <taxon>Cytomegalovirus humanbeta5</taxon>
        <taxon>Human cytomegalovirus</taxon>
    </lineage>
</organism>
<comment type="function">
    <text evidence="3 6 7 8 9">Binds to a great number of different CC-chemokines including CCL5/RANTES, CCL2/MCP-1, CCL3/MIP-1-alpha as well as CX3CL1/Fractalkine (PubMed:25745166, PubMed:7540006, PubMed:7961796). Transduces signals resulting in the activation of MAP kinase signaling pathways and augmentation of intracellular calcium ion levels, leading to alterations in chemotactic behavior of vascular smooth muscle cells and macrophages. The US28 receptor also exhibits high levels of agonist-independent signaling activity and agonist-independent endocytosis (PubMed:11050102, PubMed:25745166). Interacts with the host Gi complex without activating it, thereby probably interfering with the chemokine-Gi signaling (PubMed:35061538). May also function as a G protein sink to sequester G protein from the cell surface via internalization (PubMed:35061538). Interacts with endogenous Gaq/11 subunits and thereby constitutively activates phospholipase C (PubMed:11050102).</text>
</comment>
<comment type="subunit">
    <text evidence="5 6 7">Interacts with host GPRASP1; this interaction targets US28 to lysosomes for degradation (PubMed:20102549). Interacts with host CX3CL1/Fractalkine (via N-terminus) (PubMed:25745166). Interacts with host Gi alpha-1 subunit GNAI1; this interaction does not lead to the catalytic activation of Gi complex (PubMed:35061538).</text>
</comment>
<comment type="interaction">
    <interactant intactId="EBI-16147206">
        <id>P69332</id>
    </interactant>
    <interactant intactId="EBI-15188013">
        <id>P78423</id>
        <label>CX3CL1</label>
    </interactant>
    <organismsDiffer>true</organismsDiffer>
    <experiments>4</experiments>
</comment>
<comment type="subcellular location">
    <subcellularLocation>
        <location>Host cell membrane</location>
        <topology>Multi-pass membrane protein</topology>
    </subcellularLocation>
</comment>
<comment type="PTM">
    <text evidence="4">Phosphorylated. High phosphorylation occurs concomitantly with receptor endocytosis and correlate with low receptor presence at the plasma membrane.</text>
</comment>
<comment type="similarity">
    <text evidence="2">Belongs to the G-protein coupled receptor 1 family.</text>
</comment>
<comment type="sequence caution" evidence="10">
    <conflict type="frameshift">
        <sequence resource="EMBL-CDS" id="CAA28338"/>
    </conflict>
</comment>
<comment type="sequence caution" evidence="10">
    <conflict type="frameshift">
        <sequence resource="EMBL-CDS" id="CAA35260"/>
    </conflict>
</comment>